<dbReference type="EC" id="2.8.4.3" evidence="1"/>
<dbReference type="EMBL" id="CP001283">
    <property type="protein sequence ID" value="ACK87157.1"/>
    <property type="molecule type" value="Genomic_DNA"/>
</dbReference>
<dbReference type="RefSeq" id="WP_001005400.1">
    <property type="nucleotide sequence ID" value="NC_011773.1"/>
</dbReference>
<dbReference type="SMR" id="B7JJ50"/>
<dbReference type="KEGG" id="bcu:BCAH820_3784"/>
<dbReference type="HOGENOM" id="CLU_018697_2_0_9"/>
<dbReference type="Proteomes" id="UP000001363">
    <property type="component" value="Chromosome"/>
</dbReference>
<dbReference type="GO" id="GO:0005829">
    <property type="term" value="C:cytosol"/>
    <property type="evidence" value="ECO:0007669"/>
    <property type="project" value="TreeGrafter"/>
</dbReference>
<dbReference type="GO" id="GO:0051539">
    <property type="term" value="F:4 iron, 4 sulfur cluster binding"/>
    <property type="evidence" value="ECO:0007669"/>
    <property type="project" value="UniProtKB-UniRule"/>
</dbReference>
<dbReference type="GO" id="GO:0046872">
    <property type="term" value="F:metal ion binding"/>
    <property type="evidence" value="ECO:0007669"/>
    <property type="project" value="UniProtKB-KW"/>
</dbReference>
<dbReference type="GO" id="GO:0035597">
    <property type="term" value="F:N6-isopentenyladenosine methylthiotransferase activity"/>
    <property type="evidence" value="ECO:0007669"/>
    <property type="project" value="TreeGrafter"/>
</dbReference>
<dbReference type="CDD" id="cd01335">
    <property type="entry name" value="Radical_SAM"/>
    <property type="match status" value="1"/>
</dbReference>
<dbReference type="FunFam" id="3.40.50.12160:FF:000006">
    <property type="entry name" value="tRNA-2-methylthio-N(6)-dimethylallyladenosine synthase"/>
    <property type="match status" value="1"/>
</dbReference>
<dbReference type="FunFam" id="3.80.30.20:FF:000001">
    <property type="entry name" value="tRNA-2-methylthio-N(6)-dimethylallyladenosine synthase 2"/>
    <property type="match status" value="1"/>
</dbReference>
<dbReference type="Gene3D" id="3.40.50.12160">
    <property type="entry name" value="Methylthiotransferase, N-terminal domain"/>
    <property type="match status" value="1"/>
</dbReference>
<dbReference type="Gene3D" id="3.80.30.20">
    <property type="entry name" value="tm_1862 like domain"/>
    <property type="match status" value="1"/>
</dbReference>
<dbReference type="HAMAP" id="MF_01864">
    <property type="entry name" value="tRNA_metthiotr_MiaB"/>
    <property type="match status" value="1"/>
</dbReference>
<dbReference type="InterPro" id="IPR006638">
    <property type="entry name" value="Elp3/MiaA/NifB-like_rSAM"/>
</dbReference>
<dbReference type="InterPro" id="IPR005839">
    <property type="entry name" value="Methylthiotransferase"/>
</dbReference>
<dbReference type="InterPro" id="IPR020612">
    <property type="entry name" value="Methylthiotransferase_CS"/>
</dbReference>
<dbReference type="InterPro" id="IPR013848">
    <property type="entry name" value="Methylthiotransferase_N"/>
</dbReference>
<dbReference type="InterPro" id="IPR038135">
    <property type="entry name" value="Methylthiotransferase_N_sf"/>
</dbReference>
<dbReference type="InterPro" id="IPR006463">
    <property type="entry name" value="MiaB_methiolase"/>
</dbReference>
<dbReference type="InterPro" id="IPR007197">
    <property type="entry name" value="rSAM"/>
</dbReference>
<dbReference type="InterPro" id="IPR023404">
    <property type="entry name" value="rSAM_horseshoe"/>
</dbReference>
<dbReference type="InterPro" id="IPR002792">
    <property type="entry name" value="TRAM_dom"/>
</dbReference>
<dbReference type="NCBIfam" id="TIGR01574">
    <property type="entry name" value="miaB-methiolase"/>
    <property type="match status" value="1"/>
</dbReference>
<dbReference type="NCBIfam" id="TIGR00089">
    <property type="entry name" value="MiaB/RimO family radical SAM methylthiotransferase"/>
    <property type="match status" value="1"/>
</dbReference>
<dbReference type="PANTHER" id="PTHR43020">
    <property type="entry name" value="CDK5 REGULATORY SUBUNIT-ASSOCIATED PROTEIN 1"/>
    <property type="match status" value="1"/>
</dbReference>
<dbReference type="PANTHER" id="PTHR43020:SF2">
    <property type="entry name" value="MITOCHONDRIAL TRNA METHYLTHIOTRANSFERASE CDK5RAP1"/>
    <property type="match status" value="1"/>
</dbReference>
<dbReference type="Pfam" id="PF04055">
    <property type="entry name" value="Radical_SAM"/>
    <property type="match status" value="1"/>
</dbReference>
<dbReference type="Pfam" id="PF01938">
    <property type="entry name" value="TRAM"/>
    <property type="match status" value="1"/>
</dbReference>
<dbReference type="Pfam" id="PF00919">
    <property type="entry name" value="UPF0004"/>
    <property type="match status" value="1"/>
</dbReference>
<dbReference type="SFLD" id="SFLDF00273">
    <property type="entry name" value="(dimethylallyl)adenosine_tRNA"/>
    <property type="match status" value="1"/>
</dbReference>
<dbReference type="SFLD" id="SFLDG01082">
    <property type="entry name" value="B12-binding_domain_containing"/>
    <property type="match status" value="1"/>
</dbReference>
<dbReference type="SFLD" id="SFLDS00029">
    <property type="entry name" value="Radical_SAM"/>
    <property type="match status" value="1"/>
</dbReference>
<dbReference type="SMART" id="SM00729">
    <property type="entry name" value="Elp3"/>
    <property type="match status" value="1"/>
</dbReference>
<dbReference type="SUPFAM" id="SSF102114">
    <property type="entry name" value="Radical SAM enzymes"/>
    <property type="match status" value="1"/>
</dbReference>
<dbReference type="PROSITE" id="PS51449">
    <property type="entry name" value="MTTASE_N"/>
    <property type="match status" value="1"/>
</dbReference>
<dbReference type="PROSITE" id="PS01278">
    <property type="entry name" value="MTTASE_RADICAL"/>
    <property type="match status" value="1"/>
</dbReference>
<dbReference type="PROSITE" id="PS51918">
    <property type="entry name" value="RADICAL_SAM"/>
    <property type="match status" value="1"/>
</dbReference>
<dbReference type="PROSITE" id="PS50926">
    <property type="entry name" value="TRAM"/>
    <property type="match status" value="1"/>
</dbReference>
<keyword id="KW-0004">4Fe-4S</keyword>
<keyword id="KW-0963">Cytoplasm</keyword>
<keyword id="KW-0408">Iron</keyword>
<keyword id="KW-0411">Iron-sulfur</keyword>
<keyword id="KW-0479">Metal-binding</keyword>
<keyword id="KW-0949">S-adenosyl-L-methionine</keyword>
<keyword id="KW-0808">Transferase</keyword>
<keyword id="KW-0819">tRNA processing</keyword>
<accession>B7JJ50</accession>
<gene>
    <name evidence="1" type="primary">miaB</name>
    <name type="ordered locus">BCAH820_3784</name>
</gene>
<sequence>MNEQQRLASQQVNSSTKKEEKDYSKYFESVYQPPSLKDAKKRGKEEVKIERDFGLPEEFRNFGTGRKFYIRTYGCQMNEHDTEVMAGIFTALGYEPTFSTEDADVVLLNTCAIRENAENKVFGELGHLKSLKRRNPDLLIGVCGCMSQEESVVNKIMQKNQHVDMVFGTHNIHRLPYILKDAMFSKETVVEVWSKEGDVIENLPKVRRGDIKAWVNIMYGCDKFCTYCIVPYTRGKERSRRPEDIIQEIRHLAANGYKEITLLGQNVNAYGKDFEDIEYGLGDLMDELRKVDIARIRFTTSHPRDFDDHLIEVLGKGGNLVEHIHLPVQSGSTEMLKIMARKYSREHYLELVRKIKEAIPNAVLTTDIIVGFPNETDEQFEETMSLYREVGFDTAFTFIYSPREGTPAAKMKDNVPMEVKKERLQRLNALVNKLAIEKNDRYKGQIVEVLVDGESKNNPEVLAGYTRTNKLVNFVAPKSLIGQLVKVKVTDAKTWSLNGELVEEPIEVE</sequence>
<reference key="1">
    <citation type="submission" date="2008-10" db="EMBL/GenBank/DDBJ databases">
        <title>Genome sequence of Bacillus cereus AH820.</title>
        <authorList>
            <person name="Dodson R.J."/>
            <person name="Durkin A.S."/>
            <person name="Rosovitz M.J."/>
            <person name="Rasko D.A."/>
            <person name="Hoffmaster A."/>
            <person name="Ravel J."/>
            <person name="Sutton G."/>
        </authorList>
    </citation>
    <scope>NUCLEOTIDE SEQUENCE [LARGE SCALE GENOMIC DNA]</scope>
    <source>
        <strain>AH820</strain>
    </source>
</reference>
<name>MIAB_BACC0</name>
<feature type="chain" id="PRO_0000374126" description="tRNA-2-methylthio-N(6)-dimethylallyladenosine synthase">
    <location>
        <begin position="1"/>
        <end position="509"/>
    </location>
</feature>
<feature type="domain" description="MTTase N-terminal" evidence="1">
    <location>
        <begin position="66"/>
        <end position="184"/>
    </location>
</feature>
<feature type="domain" description="Radical SAM core" evidence="2">
    <location>
        <begin position="207"/>
        <end position="437"/>
    </location>
</feature>
<feature type="domain" description="TRAM" evidence="1">
    <location>
        <begin position="440"/>
        <end position="503"/>
    </location>
</feature>
<feature type="region of interest" description="Disordered" evidence="3">
    <location>
        <begin position="1"/>
        <end position="26"/>
    </location>
</feature>
<feature type="compositionally biased region" description="Polar residues" evidence="3">
    <location>
        <begin position="1"/>
        <end position="15"/>
    </location>
</feature>
<feature type="compositionally biased region" description="Basic and acidic residues" evidence="3">
    <location>
        <begin position="16"/>
        <end position="25"/>
    </location>
</feature>
<feature type="binding site" evidence="1">
    <location>
        <position position="75"/>
    </location>
    <ligand>
        <name>[4Fe-4S] cluster</name>
        <dbReference type="ChEBI" id="CHEBI:49883"/>
        <label>1</label>
    </ligand>
</feature>
<feature type="binding site" evidence="1">
    <location>
        <position position="111"/>
    </location>
    <ligand>
        <name>[4Fe-4S] cluster</name>
        <dbReference type="ChEBI" id="CHEBI:49883"/>
        <label>1</label>
    </ligand>
</feature>
<feature type="binding site" evidence="1">
    <location>
        <position position="145"/>
    </location>
    <ligand>
        <name>[4Fe-4S] cluster</name>
        <dbReference type="ChEBI" id="CHEBI:49883"/>
        <label>1</label>
    </ligand>
</feature>
<feature type="binding site" evidence="1">
    <location>
        <position position="221"/>
    </location>
    <ligand>
        <name>[4Fe-4S] cluster</name>
        <dbReference type="ChEBI" id="CHEBI:49883"/>
        <label>2</label>
        <note>4Fe-4S-S-AdoMet</note>
    </ligand>
</feature>
<feature type="binding site" evidence="1">
    <location>
        <position position="225"/>
    </location>
    <ligand>
        <name>[4Fe-4S] cluster</name>
        <dbReference type="ChEBI" id="CHEBI:49883"/>
        <label>2</label>
        <note>4Fe-4S-S-AdoMet</note>
    </ligand>
</feature>
<feature type="binding site" evidence="1">
    <location>
        <position position="228"/>
    </location>
    <ligand>
        <name>[4Fe-4S] cluster</name>
        <dbReference type="ChEBI" id="CHEBI:49883"/>
        <label>2</label>
        <note>4Fe-4S-S-AdoMet</note>
    </ligand>
</feature>
<evidence type="ECO:0000255" key="1">
    <source>
        <dbReference type="HAMAP-Rule" id="MF_01864"/>
    </source>
</evidence>
<evidence type="ECO:0000255" key="2">
    <source>
        <dbReference type="PROSITE-ProRule" id="PRU01266"/>
    </source>
</evidence>
<evidence type="ECO:0000256" key="3">
    <source>
        <dbReference type="SAM" id="MobiDB-lite"/>
    </source>
</evidence>
<protein>
    <recommendedName>
        <fullName evidence="1">tRNA-2-methylthio-N(6)-dimethylallyladenosine synthase</fullName>
        <ecNumber evidence="1">2.8.4.3</ecNumber>
    </recommendedName>
    <alternativeName>
        <fullName evidence="1">(Dimethylallyl)adenosine tRNA methylthiotransferase MiaB</fullName>
    </alternativeName>
    <alternativeName>
        <fullName evidence="1">tRNA-i(6)A37 methylthiotransferase</fullName>
    </alternativeName>
</protein>
<comment type="function">
    <text evidence="1">Catalyzes the methylthiolation of N6-(dimethylallyl)adenosine (i(6)A), leading to the formation of 2-methylthio-N6-(dimethylallyl)adenosine (ms(2)i(6)A) at position 37 in tRNAs that read codons beginning with uridine.</text>
</comment>
<comment type="catalytic activity">
    <reaction evidence="1">
        <text>N(6)-dimethylallyladenosine(37) in tRNA + (sulfur carrier)-SH + AH2 + 2 S-adenosyl-L-methionine = 2-methylsulfanyl-N(6)-dimethylallyladenosine(37) in tRNA + (sulfur carrier)-H + 5'-deoxyadenosine + L-methionine + A + S-adenosyl-L-homocysteine + 2 H(+)</text>
        <dbReference type="Rhea" id="RHEA:37067"/>
        <dbReference type="Rhea" id="RHEA-COMP:10375"/>
        <dbReference type="Rhea" id="RHEA-COMP:10376"/>
        <dbReference type="Rhea" id="RHEA-COMP:14737"/>
        <dbReference type="Rhea" id="RHEA-COMP:14739"/>
        <dbReference type="ChEBI" id="CHEBI:13193"/>
        <dbReference type="ChEBI" id="CHEBI:15378"/>
        <dbReference type="ChEBI" id="CHEBI:17319"/>
        <dbReference type="ChEBI" id="CHEBI:17499"/>
        <dbReference type="ChEBI" id="CHEBI:29917"/>
        <dbReference type="ChEBI" id="CHEBI:57844"/>
        <dbReference type="ChEBI" id="CHEBI:57856"/>
        <dbReference type="ChEBI" id="CHEBI:59789"/>
        <dbReference type="ChEBI" id="CHEBI:64428"/>
        <dbReference type="ChEBI" id="CHEBI:74415"/>
        <dbReference type="ChEBI" id="CHEBI:74417"/>
        <dbReference type="EC" id="2.8.4.3"/>
    </reaction>
</comment>
<comment type="cofactor">
    <cofactor evidence="1">
        <name>[4Fe-4S] cluster</name>
        <dbReference type="ChEBI" id="CHEBI:49883"/>
    </cofactor>
    <text evidence="1">Binds 2 [4Fe-4S] clusters. One cluster is coordinated with 3 cysteines and an exchangeable S-adenosyl-L-methionine.</text>
</comment>
<comment type="subunit">
    <text evidence="1">Monomer.</text>
</comment>
<comment type="subcellular location">
    <subcellularLocation>
        <location evidence="1">Cytoplasm</location>
    </subcellularLocation>
</comment>
<comment type="similarity">
    <text evidence="1">Belongs to the methylthiotransferase family. MiaB subfamily.</text>
</comment>
<organism>
    <name type="scientific">Bacillus cereus (strain AH820)</name>
    <dbReference type="NCBI Taxonomy" id="405535"/>
    <lineage>
        <taxon>Bacteria</taxon>
        <taxon>Bacillati</taxon>
        <taxon>Bacillota</taxon>
        <taxon>Bacilli</taxon>
        <taxon>Bacillales</taxon>
        <taxon>Bacillaceae</taxon>
        <taxon>Bacillus</taxon>
        <taxon>Bacillus cereus group</taxon>
    </lineage>
</organism>
<proteinExistence type="inferred from homology"/>